<reference key="1">
    <citation type="journal article" date="1996" name="Science">
        <title>Complete genome sequence of the methanogenic archaeon, Methanococcus jannaschii.</title>
        <authorList>
            <person name="Bult C.J."/>
            <person name="White O."/>
            <person name="Olsen G.J."/>
            <person name="Zhou L."/>
            <person name="Fleischmann R.D."/>
            <person name="Sutton G.G."/>
            <person name="Blake J.A."/>
            <person name="FitzGerald L.M."/>
            <person name="Clayton R.A."/>
            <person name="Gocayne J.D."/>
            <person name="Kerlavage A.R."/>
            <person name="Dougherty B.A."/>
            <person name="Tomb J.-F."/>
            <person name="Adams M.D."/>
            <person name="Reich C.I."/>
            <person name="Overbeek R."/>
            <person name="Kirkness E.F."/>
            <person name="Weinstock K.G."/>
            <person name="Merrick J.M."/>
            <person name="Glodek A."/>
            <person name="Scott J.L."/>
            <person name="Geoghagen N.S.M."/>
            <person name="Weidman J.F."/>
            <person name="Fuhrmann J.L."/>
            <person name="Nguyen D."/>
            <person name="Utterback T.R."/>
            <person name="Kelley J.M."/>
            <person name="Peterson J.D."/>
            <person name="Sadow P.W."/>
            <person name="Hanna M.C."/>
            <person name="Cotton M.D."/>
            <person name="Roberts K.M."/>
            <person name="Hurst M.A."/>
            <person name="Kaine B.P."/>
            <person name="Borodovsky M."/>
            <person name="Klenk H.-P."/>
            <person name="Fraser C.M."/>
            <person name="Smith H.O."/>
            <person name="Woese C.R."/>
            <person name="Venter J.C."/>
        </authorList>
    </citation>
    <scope>NUCLEOTIDE SEQUENCE [LARGE SCALE GENOMIC DNA]</scope>
    <source>
        <strain>ATCC 43067 / DSM 2661 / JAL-1 / JCM 10045 / NBRC 100440</strain>
    </source>
</reference>
<sequence length="110" mass="12180">MGVSMSLWKKLDEKENQRTHNLSNSDANDRILRVINSAFGVPDDIKEEVIAAIDKAIKHGLENGTLNYLKVIELACEGYTKEDIAEAYGHQILGAYVAVLILTGKPLKLK</sequence>
<dbReference type="EMBL" id="L77117">
    <property type="protein sequence ID" value="AAB98320.1"/>
    <property type="molecule type" value="Genomic_DNA"/>
</dbReference>
<dbReference type="PIR" id="D64341">
    <property type="entry name" value="D64341"/>
</dbReference>
<dbReference type="SMR" id="Q57778"/>
<dbReference type="STRING" id="243232.MJ_0332"/>
<dbReference type="PaxDb" id="243232-MJ_0332"/>
<dbReference type="EnsemblBacteria" id="AAB98320">
    <property type="protein sequence ID" value="AAB98320"/>
    <property type="gene ID" value="MJ_0332"/>
</dbReference>
<dbReference type="KEGG" id="mja:MJ_0332"/>
<dbReference type="eggNOG" id="arCOG09638">
    <property type="taxonomic scope" value="Archaea"/>
</dbReference>
<dbReference type="HOGENOM" id="CLU_2257357_0_0_2"/>
<dbReference type="InParanoid" id="Q57778"/>
<dbReference type="OrthoDB" id="375018at2157"/>
<dbReference type="Proteomes" id="UP000000805">
    <property type="component" value="Chromosome"/>
</dbReference>
<organism>
    <name type="scientific">Methanocaldococcus jannaschii (strain ATCC 43067 / DSM 2661 / JAL-1 / JCM 10045 / NBRC 100440)</name>
    <name type="common">Methanococcus jannaschii</name>
    <dbReference type="NCBI Taxonomy" id="243232"/>
    <lineage>
        <taxon>Archaea</taxon>
        <taxon>Methanobacteriati</taxon>
        <taxon>Methanobacteriota</taxon>
        <taxon>Methanomada group</taxon>
        <taxon>Methanococci</taxon>
        <taxon>Methanococcales</taxon>
        <taxon>Methanocaldococcaceae</taxon>
        <taxon>Methanocaldococcus</taxon>
    </lineage>
</organism>
<keyword id="KW-1185">Reference proteome</keyword>
<proteinExistence type="predicted"/>
<accession>Q57778</accession>
<feature type="chain" id="PRO_0000106801" description="Uncharacterized protein MJ0332">
    <location>
        <begin position="1"/>
        <end position="110"/>
    </location>
</feature>
<protein>
    <recommendedName>
        <fullName>Uncharacterized protein MJ0332</fullName>
    </recommendedName>
</protein>
<gene>
    <name type="ordered locus">MJ0332</name>
</gene>
<name>Y332_METJA</name>